<protein>
    <recommendedName>
        <fullName>Probable glutathione peroxidase 8-A</fullName>
        <shortName>GPx-8-A</shortName>
        <shortName>GSHPx-8-A</shortName>
        <ecNumber>1.11.1.9</ecNumber>
    </recommendedName>
</protein>
<evidence type="ECO:0000250" key="1"/>
<evidence type="ECO:0000255" key="2"/>
<evidence type="ECO:0000305" key="3"/>
<accession>Q6IRC8</accession>
<reference key="1">
    <citation type="submission" date="2004-05" db="EMBL/GenBank/DDBJ databases">
        <authorList>
            <consortium name="NIH - Xenopus Gene Collection (XGC) project"/>
        </authorList>
    </citation>
    <scope>NUCLEOTIDE SEQUENCE [LARGE SCALE MRNA]</scope>
    <source>
        <tissue>Embryo</tissue>
    </source>
</reference>
<feature type="chain" id="PRO_0000317759" description="Probable glutathione peroxidase 8-A">
    <location>
        <begin position="1"/>
        <end position="209"/>
    </location>
</feature>
<feature type="transmembrane region" description="Helical" evidence="2">
    <location>
        <begin position="18"/>
        <end position="40"/>
    </location>
</feature>
<feature type="active site" evidence="1">
    <location>
        <position position="79"/>
    </location>
</feature>
<proteinExistence type="evidence at transcript level"/>
<sequence>MEPLNPYPVKFSSPKAKVSVVFLSMLLCTGILCVLQLGFLRAKGGDFYSYEVTDAKGRAVALSKYRGKASLVVNVASGCPHAEANYRSLQELHREFGPSHFTVLAFPCNQFGESEPGTNQEIGALAKRNYGVTFPMFSKIKILGSEAEPAYRFLVDSTKKEPRWNFWKYLVDPQGQVVKYWRPDETAESIRPEVASLVRQIIMKKKEEL</sequence>
<keyword id="KW-0472">Membrane</keyword>
<keyword id="KW-0560">Oxidoreductase</keyword>
<keyword id="KW-0575">Peroxidase</keyword>
<keyword id="KW-1185">Reference proteome</keyword>
<keyword id="KW-0812">Transmembrane</keyword>
<keyword id="KW-1133">Transmembrane helix</keyword>
<organism>
    <name type="scientific">Xenopus laevis</name>
    <name type="common">African clawed frog</name>
    <dbReference type="NCBI Taxonomy" id="8355"/>
    <lineage>
        <taxon>Eukaryota</taxon>
        <taxon>Metazoa</taxon>
        <taxon>Chordata</taxon>
        <taxon>Craniata</taxon>
        <taxon>Vertebrata</taxon>
        <taxon>Euteleostomi</taxon>
        <taxon>Amphibia</taxon>
        <taxon>Batrachia</taxon>
        <taxon>Anura</taxon>
        <taxon>Pipoidea</taxon>
        <taxon>Pipidae</taxon>
        <taxon>Xenopodinae</taxon>
        <taxon>Xenopus</taxon>
        <taxon>Xenopus</taxon>
    </lineage>
</organism>
<dbReference type="EC" id="1.11.1.9"/>
<dbReference type="EMBL" id="BC070970">
    <property type="protein sequence ID" value="AAH70970.1"/>
    <property type="molecule type" value="mRNA"/>
</dbReference>
<dbReference type="RefSeq" id="NP_001085022.1">
    <property type="nucleotide sequence ID" value="NM_001091553.1"/>
</dbReference>
<dbReference type="SMR" id="Q6IRC8"/>
<dbReference type="DNASU" id="432086"/>
<dbReference type="GeneID" id="432086"/>
<dbReference type="KEGG" id="xla:432086"/>
<dbReference type="AGR" id="Xenbase:XB-GENE-6256273"/>
<dbReference type="CTD" id="432086"/>
<dbReference type="Xenbase" id="XB-GENE-6256273">
    <property type="gene designation" value="gpx8.S"/>
</dbReference>
<dbReference type="OrthoDB" id="446890at2759"/>
<dbReference type="Proteomes" id="UP000186698">
    <property type="component" value="Chromosome 1S"/>
</dbReference>
<dbReference type="Bgee" id="432086">
    <property type="expression patterns" value="Expressed in oocyte and 19 other cell types or tissues"/>
</dbReference>
<dbReference type="GO" id="GO:0016020">
    <property type="term" value="C:membrane"/>
    <property type="evidence" value="ECO:0007669"/>
    <property type="project" value="UniProtKB-SubCell"/>
</dbReference>
<dbReference type="GO" id="GO:0004602">
    <property type="term" value="F:glutathione peroxidase activity"/>
    <property type="evidence" value="ECO:0007669"/>
    <property type="project" value="UniProtKB-EC"/>
</dbReference>
<dbReference type="GO" id="GO:0004601">
    <property type="term" value="F:peroxidase activity"/>
    <property type="evidence" value="ECO:0000318"/>
    <property type="project" value="GO_Central"/>
</dbReference>
<dbReference type="GO" id="GO:0006979">
    <property type="term" value="P:response to oxidative stress"/>
    <property type="evidence" value="ECO:0007669"/>
    <property type="project" value="InterPro"/>
</dbReference>
<dbReference type="CDD" id="cd00340">
    <property type="entry name" value="GSH_Peroxidase"/>
    <property type="match status" value="1"/>
</dbReference>
<dbReference type="FunFam" id="3.40.30.10:FF:000049">
    <property type="entry name" value="Glutathione peroxidase"/>
    <property type="match status" value="1"/>
</dbReference>
<dbReference type="Gene3D" id="3.40.30.10">
    <property type="entry name" value="Glutaredoxin"/>
    <property type="match status" value="1"/>
</dbReference>
<dbReference type="InterPro" id="IPR013376">
    <property type="entry name" value="Glut_perox_Gpx7"/>
</dbReference>
<dbReference type="InterPro" id="IPR000889">
    <property type="entry name" value="Glutathione_peroxidase"/>
</dbReference>
<dbReference type="InterPro" id="IPR029760">
    <property type="entry name" value="GPX_CS"/>
</dbReference>
<dbReference type="InterPro" id="IPR036249">
    <property type="entry name" value="Thioredoxin-like_sf"/>
</dbReference>
<dbReference type="InterPro" id="IPR013766">
    <property type="entry name" value="Thioredoxin_domain"/>
</dbReference>
<dbReference type="NCBIfam" id="TIGR02540">
    <property type="entry name" value="gpx7"/>
    <property type="match status" value="1"/>
</dbReference>
<dbReference type="PANTHER" id="PTHR11592">
    <property type="entry name" value="GLUTATHIONE PEROXIDASE"/>
    <property type="match status" value="1"/>
</dbReference>
<dbReference type="PANTHER" id="PTHR11592:SF7">
    <property type="entry name" value="GLUTATHIONE PEROXIDASE 8-RELATED"/>
    <property type="match status" value="1"/>
</dbReference>
<dbReference type="Pfam" id="PF00255">
    <property type="entry name" value="GSHPx"/>
    <property type="match status" value="1"/>
</dbReference>
<dbReference type="PRINTS" id="PR01011">
    <property type="entry name" value="GLUTPROXDASE"/>
</dbReference>
<dbReference type="SUPFAM" id="SSF52833">
    <property type="entry name" value="Thioredoxin-like"/>
    <property type="match status" value="1"/>
</dbReference>
<dbReference type="PROSITE" id="PS00014">
    <property type="entry name" value="ER_TARGET"/>
    <property type="match status" value="1"/>
</dbReference>
<dbReference type="PROSITE" id="PS00763">
    <property type="entry name" value="GLUTATHIONE_PEROXID_2"/>
    <property type="match status" value="1"/>
</dbReference>
<dbReference type="PROSITE" id="PS51355">
    <property type="entry name" value="GLUTATHIONE_PEROXID_3"/>
    <property type="match status" value="1"/>
</dbReference>
<gene>
    <name type="primary">gpx8-a</name>
</gene>
<name>GPX8A_XENLA</name>
<comment type="catalytic activity">
    <reaction>
        <text>2 glutathione + H2O2 = glutathione disulfide + 2 H2O</text>
        <dbReference type="Rhea" id="RHEA:16833"/>
        <dbReference type="ChEBI" id="CHEBI:15377"/>
        <dbReference type="ChEBI" id="CHEBI:16240"/>
        <dbReference type="ChEBI" id="CHEBI:57925"/>
        <dbReference type="ChEBI" id="CHEBI:58297"/>
        <dbReference type="EC" id="1.11.1.9"/>
    </reaction>
</comment>
<comment type="subcellular location">
    <subcellularLocation>
        <location evidence="3">Membrane</location>
        <topology evidence="3">Single-pass membrane protein</topology>
    </subcellularLocation>
</comment>
<comment type="similarity">
    <text evidence="3">Belongs to the glutathione peroxidase family.</text>
</comment>